<accession>P39687</accession>
<accession>B2R6T4</accession>
<accession>Q53FK4</accession>
<accession>Q5J8L8</accession>
<accession>Q7M4N6</accession>
<name>AN32A_HUMAN</name>
<reference key="1">
    <citation type="journal article" date="1994" name="Biol. Chem. Hoppe-Seyler">
        <title>Purification and characterization of two putative HLA class II associated proteins: PHAPI and PHAPII.</title>
        <authorList>
            <person name="Vaesen M."/>
            <person name="Barnikol-Watanabe S."/>
            <person name="Goetz H."/>
            <person name="Adil Awni L."/>
            <person name="Cole T."/>
            <person name="Zimmermann B."/>
            <person name="Kratzin H.D."/>
            <person name="Hilschmann N."/>
        </authorList>
    </citation>
    <scope>NUCLEOTIDE SEQUENCE [MRNA]</scope>
    <scope>PROTEIN SEQUENCE OF 1-26; 29-47; 71-97 AND 100-161</scope>
    <source>
        <tissue>B-cell lymphoma</tissue>
    </source>
</reference>
<reference key="2">
    <citation type="journal article" date="1996" name="Biochemistry">
        <title>Molecular identification of I1PP2A, a novel potent heat-stable inhibitor protein of protein phosphatase 2A.</title>
        <authorList>
            <person name="Li M."/>
            <person name="Makkinje A."/>
            <person name="Damuni Z."/>
        </authorList>
    </citation>
    <scope>NUCLEOTIDE SEQUENCE [MRNA]</scope>
    <scope>PROTEIN SEQUENCE OF 7-12 AND 29-44</scope>
    <source>
        <tissue>Kidney</tissue>
    </source>
</reference>
<reference key="3">
    <citation type="journal article" date="1996" name="Mol. Biol. Cell">
        <title>Structure of pp32, an acidic nuclear protein which inhibits oncogene-induced formation of transformed foci.</title>
        <authorList>
            <person name="Chen T.-H."/>
            <person name="Brody J.R."/>
            <person name="Romantsev F.E."/>
            <person name="Yu J.-G."/>
            <person name="Kayler A.E."/>
            <person name="Voneiff E."/>
            <person name="Kuhajda F.P."/>
            <person name="Pasternack G.R."/>
        </authorList>
    </citation>
    <scope>NUCLEOTIDE SEQUENCE [MRNA]</scope>
</reference>
<reference key="4">
    <citation type="journal article" date="1997" name="Nature">
        <title>The cerebellar leucine-rich acidic nuclear protein interacts with ataxin-1.</title>
        <authorList>
            <person name="Matilla A."/>
            <person name="Koshy B.T."/>
            <person name="Cummings C.J."/>
            <person name="Isobe T."/>
            <person name="Orr H.T."/>
            <person name="Zoghbi H.Y."/>
        </authorList>
    </citation>
    <scope>NUCLEOTIDE SEQUENCE [MRNA]</scope>
</reference>
<reference key="5">
    <citation type="journal article" date="2004" name="Nat. Genet.">
        <title>Complete sequencing and characterization of 21,243 full-length human cDNAs.</title>
        <authorList>
            <person name="Ota T."/>
            <person name="Suzuki Y."/>
            <person name="Nishikawa T."/>
            <person name="Otsuki T."/>
            <person name="Sugiyama T."/>
            <person name="Irie R."/>
            <person name="Wakamatsu A."/>
            <person name="Hayashi K."/>
            <person name="Sato H."/>
            <person name="Nagai K."/>
            <person name="Kimura K."/>
            <person name="Makita H."/>
            <person name="Sekine M."/>
            <person name="Obayashi M."/>
            <person name="Nishi T."/>
            <person name="Shibahara T."/>
            <person name="Tanaka T."/>
            <person name="Ishii S."/>
            <person name="Yamamoto J."/>
            <person name="Saito K."/>
            <person name="Kawai Y."/>
            <person name="Isono Y."/>
            <person name="Nakamura Y."/>
            <person name="Nagahari K."/>
            <person name="Murakami K."/>
            <person name="Yasuda T."/>
            <person name="Iwayanagi T."/>
            <person name="Wagatsuma M."/>
            <person name="Shiratori A."/>
            <person name="Sudo H."/>
            <person name="Hosoiri T."/>
            <person name="Kaku Y."/>
            <person name="Kodaira H."/>
            <person name="Kondo H."/>
            <person name="Sugawara M."/>
            <person name="Takahashi M."/>
            <person name="Kanda K."/>
            <person name="Yokoi T."/>
            <person name="Furuya T."/>
            <person name="Kikkawa E."/>
            <person name="Omura Y."/>
            <person name="Abe K."/>
            <person name="Kamihara K."/>
            <person name="Katsuta N."/>
            <person name="Sato K."/>
            <person name="Tanikawa M."/>
            <person name="Yamazaki M."/>
            <person name="Ninomiya K."/>
            <person name="Ishibashi T."/>
            <person name="Yamashita H."/>
            <person name="Murakawa K."/>
            <person name="Fujimori K."/>
            <person name="Tanai H."/>
            <person name="Kimata M."/>
            <person name="Watanabe M."/>
            <person name="Hiraoka S."/>
            <person name="Chiba Y."/>
            <person name="Ishida S."/>
            <person name="Ono Y."/>
            <person name="Takiguchi S."/>
            <person name="Watanabe S."/>
            <person name="Yosida M."/>
            <person name="Hotuta T."/>
            <person name="Kusano J."/>
            <person name="Kanehori K."/>
            <person name="Takahashi-Fujii A."/>
            <person name="Hara H."/>
            <person name="Tanase T.-O."/>
            <person name="Nomura Y."/>
            <person name="Togiya S."/>
            <person name="Komai F."/>
            <person name="Hara R."/>
            <person name="Takeuchi K."/>
            <person name="Arita M."/>
            <person name="Imose N."/>
            <person name="Musashino K."/>
            <person name="Yuuki H."/>
            <person name="Oshima A."/>
            <person name="Sasaki N."/>
            <person name="Aotsuka S."/>
            <person name="Yoshikawa Y."/>
            <person name="Matsunawa H."/>
            <person name="Ichihara T."/>
            <person name="Shiohata N."/>
            <person name="Sano S."/>
            <person name="Moriya S."/>
            <person name="Momiyama H."/>
            <person name="Satoh N."/>
            <person name="Takami S."/>
            <person name="Terashima Y."/>
            <person name="Suzuki O."/>
            <person name="Nakagawa S."/>
            <person name="Senoh A."/>
            <person name="Mizoguchi H."/>
            <person name="Goto Y."/>
            <person name="Shimizu F."/>
            <person name="Wakebe H."/>
            <person name="Hishigaki H."/>
            <person name="Watanabe T."/>
            <person name="Sugiyama A."/>
            <person name="Takemoto M."/>
            <person name="Kawakami B."/>
            <person name="Yamazaki M."/>
            <person name="Watanabe K."/>
            <person name="Kumagai A."/>
            <person name="Itakura S."/>
            <person name="Fukuzumi Y."/>
            <person name="Fujimori Y."/>
            <person name="Komiyama M."/>
            <person name="Tashiro H."/>
            <person name="Tanigami A."/>
            <person name="Fujiwara T."/>
            <person name="Ono T."/>
            <person name="Yamada K."/>
            <person name="Fujii Y."/>
            <person name="Ozaki K."/>
            <person name="Hirao M."/>
            <person name="Ohmori Y."/>
            <person name="Kawabata A."/>
            <person name="Hikiji T."/>
            <person name="Kobatake N."/>
            <person name="Inagaki H."/>
            <person name="Ikema Y."/>
            <person name="Okamoto S."/>
            <person name="Okitani R."/>
            <person name="Kawakami T."/>
            <person name="Noguchi S."/>
            <person name="Itoh T."/>
            <person name="Shigeta K."/>
            <person name="Senba T."/>
            <person name="Matsumura K."/>
            <person name="Nakajima Y."/>
            <person name="Mizuno T."/>
            <person name="Morinaga M."/>
            <person name="Sasaki M."/>
            <person name="Togashi T."/>
            <person name="Oyama M."/>
            <person name="Hata H."/>
            <person name="Watanabe M."/>
            <person name="Komatsu T."/>
            <person name="Mizushima-Sugano J."/>
            <person name="Satoh T."/>
            <person name="Shirai Y."/>
            <person name="Takahashi Y."/>
            <person name="Nakagawa K."/>
            <person name="Okumura K."/>
            <person name="Nagase T."/>
            <person name="Nomura N."/>
            <person name="Kikuchi H."/>
            <person name="Masuho Y."/>
            <person name="Yamashita R."/>
            <person name="Nakai K."/>
            <person name="Yada T."/>
            <person name="Nakamura Y."/>
            <person name="Ohara O."/>
            <person name="Isogai T."/>
            <person name="Sugano S."/>
        </authorList>
    </citation>
    <scope>NUCLEOTIDE SEQUENCE [LARGE SCALE MRNA]</scope>
</reference>
<reference key="6">
    <citation type="journal article" date="2005" name="FEBS Lett.">
        <title>Inhibitors of protein phosphatase-2A from human brain structures, immunocytological localization and activities towards dephosphorylation of the Alzheimer type hyperphosphorylated tau.</title>
        <authorList>
            <person name="Tsujio I."/>
            <person name="Zaidi T."/>
            <person name="Xu J."/>
            <person name="Kotula L."/>
            <person name="Grundke-Iqbal I."/>
            <person name="Iqbal K."/>
        </authorList>
    </citation>
    <scope>NUCLEOTIDE SEQUENCE [MRNA]</scope>
    <scope>FUNCTION</scope>
    <scope>SUBCELLULAR LOCATION</scope>
    <scope>TISSUE SPECIFICITY</scope>
    <source>
        <tissue>Brain</tissue>
    </source>
</reference>
<reference key="7">
    <citation type="submission" date="2003-05" db="EMBL/GenBank/DDBJ databases">
        <title>Cloning of human full-length CDSs in BD Creator(TM) system donor vector.</title>
        <authorList>
            <person name="Kalnine N."/>
            <person name="Chen X."/>
            <person name="Rolfs A."/>
            <person name="Halleck A."/>
            <person name="Hines L."/>
            <person name="Eisenstein S."/>
            <person name="Koundinya M."/>
            <person name="Raphael J."/>
            <person name="Moreira D."/>
            <person name="Kelley T."/>
            <person name="LaBaer J."/>
            <person name="Lin Y."/>
            <person name="Phelan M."/>
            <person name="Farmer A."/>
        </authorList>
    </citation>
    <scope>NUCLEOTIDE SEQUENCE [LARGE SCALE MRNA]</scope>
</reference>
<reference key="8">
    <citation type="submission" date="2005-04" db="EMBL/GenBank/DDBJ databases">
        <authorList>
            <person name="Suzuki Y."/>
            <person name="Sugano S."/>
            <person name="Totoki Y."/>
            <person name="Toyoda A."/>
            <person name="Takeda T."/>
            <person name="Sakaki Y."/>
            <person name="Tanaka A."/>
            <person name="Yokoyama S."/>
        </authorList>
    </citation>
    <scope>NUCLEOTIDE SEQUENCE [LARGE SCALE MRNA]</scope>
    <source>
        <tissue>Synovium</tissue>
    </source>
</reference>
<reference key="9">
    <citation type="submission" date="2005-07" db="EMBL/GenBank/DDBJ databases">
        <authorList>
            <person name="Mural R.J."/>
            <person name="Istrail S."/>
            <person name="Sutton G.G."/>
            <person name="Florea L."/>
            <person name="Halpern A.L."/>
            <person name="Mobarry C.M."/>
            <person name="Lippert R."/>
            <person name="Walenz B."/>
            <person name="Shatkay H."/>
            <person name="Dew I."/>
            <person name="Miller J.R."/>
            <person name="Flanigan M.J."/>
            <person name="Edwards N.J."/>
            <person name="Bolanos R."/>
            <person name="Fasulo D."/>
            <person name="Halldorsson B.V."/>
            <person name="Hannenhalli S."/>
            <person name="Turner R."/>
            <person name="Yooseph S."/>
            <person name="Lu F."/>
            <person name="Nusskern D.R."/>
            <person name="Shue B.C."/>
            <person name="Zheng X.H."/>
            <person name="Zhong F."/>
            <person name="Delcher A.L."/>
            <person name="Huson D.H."/>
            <person name="Kravitz S.A."/>
            <person name="Mouchard L."/>
            <person name="Reinert K."/>
            <person name="Remington K.A."/>
            <person name="Clark A.G."/>
            <person name="Waterman M.S."/>
            <person name="Eichler E.E."/>
            <person name="Adams M.D."/>
            <person name="Hunkapiller M.W."/>
            <person name="Myers E.W."/>
            <person name="Venter J.C."/>
        </authorList>
    </citation>
    <scope>NUCLEOTIDE SEQUENCE [LARGE SCALE GENOMIC DNA]</scope>
</reference>
<reference key="10">
    <citation type="journal article" date="2004" name="Genome Res.">
        <title>The status, quality, and expansion of the NIH full-length cDNA project: the Mammalian Gene Collection (MGC).</title>
        <authorList>
            <consortium name="The MGC Project Team"/>
        </authorList>
    </citation>
    <scope>NUCLEOTIDE SEQUENCE [LARGE SCALE MRNA]</scope>
    <source>
        <tissue>Lymph</tissue>
    </source>
</reference>
<reference key="11">
    <citation type="journal article" date="1999" name="J. Biol. Chem.">
        <title>Identification of sequences required for inhibition of oncogene-mediated transformation by pp32.</title>
        <authorList>
            <person name="Brody J.R."/>
            <person name="Kadkol S.S."/>
            <person name="Mahmoud M.A."/>
            <person name="Rebel J.M."/>
            <person name="Pasternack G.R."/>
        </authorList>
    </citation>
    <scope>FUNCTION</scope>
    <scope>SUBCELLULAR LOCATION</scope>
</reference>
<reference key="12">
    <citation type="journal article" date="2001" name="Cell">
        <title>Regulation of histone acetylation and transcription by INHAT, a human cellular complex containing the Set oncoprotein.</title>
        <authorList>
            <person name="Seo S.-B."/>
            <person name="McNamara P."/>
            <person name="Heo S."/>
            <person name="Turner A."/>
            <person name="Lane W.S."/>
            <person name="Chakravarti D."/>
        </authorList>
    </citation>
    <scope>INTERACTION WITH THE INHAT COMPLEX</scope>
    <scope>IDENTIFICATION BY MASS SPECTROMETRY</scope>
</reference>
<reference key="13">
    <citation type="journal article" date="2001" name="J. Biol. Chem.">
        <title>Granzyme A activates an endoplasmic reticulum-associated caspase-independent nuclease to induce single-stranded DNA nicks.</title>
        <authorList>
            <person name="Beresford P.J."/>
            <person name="Zhang D."/>
            <person name="Oh D.Y."/>
            <person name="Fan Z."/>
            <person name="Greer E.L."/>
            <person name="Russo M.L."/>
            <person name="Jaju M."/>
            <person name="Lieberman J."/>
        </authorList>
    </citation>
    <scope>INTERACTION WITH SET</scope>
</reference>
<reference key="14">
    <citation type="journal article" date="2001" name="Oncogene">
        <title>Tumor suppression and potentiation by manipulation of pp32 expression.</title>
        <authorList>
            <person name="Bai J."/>
            <person name="Brody J.R."/>
            <person name="Kadkol S.S."/>
            <person name="Pasternack G.R."/>
        </authorList>
    </citation>
    <scope>FUNCTION</scope>
</reference>
<reference key="15">
    <citation type="journal article" date="2001" name="Science">
        <title>Delineation of mRNA export pathways by the use of cell-permeable peptides.</title>
        <authorList>
            <person name="Gallouzi I.-E."/>
            <person name="Steitz J.A."/>
        </authorList>
    </citation>
    <scope>INTERACTION WITH ELAVL1</scope>
    <scope>SUBCELLULAR LOCATION</scope>
</reference>
<reference key="16">
    <citation type="journal article" date="2002" name="J. Biol. Chem.">
        <title>Regulation of histone acetylation and transcription by nuclear protein pp32, a subunit of the INHAT complex.</title>
        <authorList>
            <person name="Seo S.B."/>
            <person name="Macfarlan T."/>
            <person name="McNamara P."/>
            <person name="Hong R."/>
            <person name="Mukai Y."/>
            <person name="Heo S."/>
            <person name="Chakravarti D."/>
        </authorList>
    </citation>
    <scope>FUNCTION</scope>
    <scope>SUBCELLULAR LOCATION</scope>
</reference>
<reference key="17">
    <citation type="journal article" date="2003" name="Cell">
        <title>Tumor suppressor NM23-H1 is a granzyme A-activated DNase during CTL-mediated apoptosis, and the nucleosome assembly protein SET is its inhibitor.</title>
        <authorList>
            <person name="Fan Z."/>
            <person name="Beresford P.J."/>
            <person name="Oh D.Y."/>
            <person name="Zhang D."/>
            <person name="Lieberman J."/>
        </authorList>
    </citation>
    <scope>IDENTIFICATION IN THE SET COMPLEX</scope>
</reference>
<reference key="18">
    <citation type="journal article" date="2003" name="Nat. Immunol.">
        <title>Cleaving the oxidative repair protein Ape1 enhances cell death mediated by granzyme A.</title>
        <authorList>
            <person name="Fan Z."/>
            <person name="Beresford P.J."/>
            <person name="Zhang D."/>
            <person name="Xu Z."/>
            <person name="Novina C.D."/>
            <person name="Yoshida A."/>
            <person name="Pommier Y."/>
            <person name="Lieberman J."/>
        </authorList>
    </citation>
    <scope>SUBCELLULAR LOCATION</scope>
</reference>
<reference key="19">
    <citation type="journal article" date="2004" name="Biochemistry">
        <title>The identification of phosphorylation sites of pp32 and biochemical purification of a cellular pp32-kinase.</title>
        <authorList>
            <person name="Hong R."/>
            <person name="Macfarlan T."/>
            <person name="Kutney S.N."/>
            <person name="Seo S.B."/>
            <person name="Mukai Y."/>
            <person name="Yelin F."/>
            <person name="Pasternack G.R."/>
            <person name="Chakravarti D."/>
        </authorList>
    </citation>
    <scope>PHOSPHORYLATION AT SER-158 AND SER-204</scope>
    <scope>MUTAGENESIS OF SER-158 AND SER-204</scope>
</reference>
<reference key="20">
    <citation type="journal article" date="2005" name="Cerebellum">
        <title>The Anp32 family of proteins containing leucine-rich repeats.</title>
        <authorList>
            <person name="Matilla A."/>
            <person name="Radrizzani M."/>
        </authorList>
    </citation>
    <scope>GENE FAMILY</scope>
    <scope>NOMENCLATURE</scope>
</reference>
<reference key="21">
    <citation type="journal article" date="2006" name="Mol. Cell">
        <title>The exonuclease TREX1 is in the SET complex and acts in concert with NM23-H1 to degrade DNA during granzyme A-mediated cell death.</title>
        <authorList>
            <person name="Chowdhury D."/>
            <person name="Beresford P.J."/>
            <person name="Zhu P."/>
            <person name="Zhang D."/>
            <person name="Sung J.S."/>
            <person name="Demple B."/>
            <person name="Perrino F.W."/>
            <person name="Lieberman J."/>
        </authorList>
    </citation>
    <scope>IDENTIFICATION IN THE SET COMPLEX</scope>
</reference>
<reference key="22">
    <citation type="journal article" date="2006" name="Cell Death Differ.">
        <title>Tumor suppressor pp32 represses cell growth through inhibition of transcription by blocking acetylation and phosphorylation of histone H3 and initiating its proapoptotic activity.</title>
        <authorList>
            <person name="Fan Z."/>
            <person name="Zhang H."/>
            <person name="Zhang Q."/>
        </authorList>
    </citation>
    <scope>FUNCTION</scope>
</reference>
<reference key="23">
    <citation type="journal article" date="2007" name="EMBO Rep.">
        <title>The role of LANP and ataxin 1 in E4F-mediated transcriptional repression.</title>
        <authorList>
            <person name="Cvetanovic M."/>
            <person name="Rooney R.J."/>
            <person name="Garcia J.J."/>
            <person name="Toporovskaya N."/>
            <person name="Zoghbi H.Y."/>
            <person name="Opal P."/>
        </authorList>
    </citation>
    <scope>FUNCTION</scope>
    <scope>INTERACTION WITH E4F1</scope>
</reference>
<reference key="24">
    <citation type="journal article" date="2008" name="Proc. Natl. Acad. Sci. U.S.A.">
        <title>A quantitative atlas of mitotic phosphorylation.</title>
        <authorList>
            <person name="Dephoure N."/>
            <person name="Zhou C."/>
            <person name="Villen J."/>
            <person name="Beausoleil S.A."/>
            <person name="Bakalarski C.E."/>
            <person name="Elledge S.J."/>
            <person name="Gygi S.P."/>
        </authorList>
    </citation>
    <scope>PHOSPHORYLATION [LARGE SCALE ANALYSIS] AT THR-15 AND SER-17</scope>
    <scope>IDENTIFICATION BY MASS SPECTROMETRY [LARGE SCALE ANALYSIS]</scope>
    <source>
        <tissue>Cervix carcinoma</tissue>
    </source>
</reference>
<reference key="25">
    <citation type="journal article" date="2008" name="J. Cell Biol.">
        <title>Caspase-mediated cleavage of HuR in the cytoplasm contributes to pp32/PHAP-I regulation of apoptosis.</title>
        <authorList>
            <person name="Mazroui R."/>
            <person name="Di Marco S."/>
            <person name="Clair E."/>
            <person name="von Roretz C."/>
            <person name="Tenenbaum S.A."/>
            <person name="Keene J.D."/>
            <person name="Saleh M."/>
            <person name="Gallouzi I.E."/>
        </authorList>
    </citation>
    <scope>FUNCTION</scope>
    <scope>SUBCELLULAR LOCATION</scope>
    <scope>INTERACTION WITH ELAVL1</scope>
</reference>
<reference key="26">
    <citation type="journal article" date="2008" name="Mol. Cell">
        <title>PHAPI, CAS, and Hsp70 promote apoptosome formation by preventing Apaf-1 aggregation and enhancing nucleotide exchange on Apaf-1.</title>
        <authorList>
            <person name="Kim H.E."/>
            <person name="Jiang X."/>
            <person name="Du F."/>
            <person name="Wang X."/>
        </authorList>
    </citation>
    <scope>FUNCTION</scope>
</reference>
<reference key="27">
    <citation type="journal article" date="2011" name="BMC Syst. Biol.">
        <title>Initial characterization of the human central proteome.</title>
        <authorList>
            <person name="Burkard T.R."/>
            <person name="Planyavsky M."/>
            <person name="Kaupe I."/>
            <person name="Breitwieser F.P."/>
            <person name="Buerckstuemmer T."/>
            <person name="Bennett K.L."/>
            <person name="Superti-Furga G."/>
            <person name="Colinge J."/>
        </authorList>
    </citation>
    <scope>IDENTIFICATION BY MASS SPECTROMETRY [LARGE SCALE ANALYSIS]</scope>
</reference>
<reference key="28">
    <citation type="journal article" date="2011" name="J. Virol.">
        <title>Foamy virus nuclear RNA export is distinct from that of other retroviruses.</title>
        <authorList>
            <person name="Bodem J."/>
            <person name="Schied T."/>
            <person name="Gabriel R."/>
            <person name="Rammling M."/>
            <person name="Rethwilm A."/>
        </authorList>
    </citation>
    <scope>FUNCTION (MICROBIAL INFECTION)</scope>
</reference>
<reference key="29">
    <citation type="journal article" date="2013" name="J. Proteome Res.">
        <title>Toward a comprehensive characterization of a human cancer cell phosphoproteome.</title>
        <authorList>
            <person name="Zhou H."/>
            <person name="Di Palma S."/>
            <person name="Preisinger C."/>
            <person name="Peng M."/>
            <person name="Polat A.N."/>
            <person name="Heck A.J."/>
            <person name="Mohammed S."/>
        </authorList>
    </citation>
    <scope>PHOSPHORYLATION [LARGE SCALE ANALYSIS] AT THR-15 AND SER-17</scope>
    <scope>IDENTIFICATION BY MASS SPECTROMETRY [LARGE SCALE ANALYSIS]</scope>
    <source>
        <tissue>Cervix carcinoma</tissue>
    </source>
</reference>
<reference key="30">
    <citation type="journal article" date="2014" name="J. Proteomics">
        <title>An enzyme assisted RP-RPLC approach for in-depth analysis of human liver phosphoproteome.</title>
        <authorList>
            <person name="Bian Y."/>
            <person name="Song C."/>
            <person name="Cheng K."/>
            <person name="Dong M."/>
            <person name="Wang F."/>
            <person name="Huang J."/>
            <person name="Sun D."/>
            <person name="Wang L."/>
            <person name="Ye M."/>
            <person name="Zou H."/>
        </authorList>
    </citation>
    <scope>PHOSPHORYLATION [LARGE SCALE ANALYSIS] AT SER-158</scope>
    <scope>IDENTIFICATION BY MASS SPECTROMETRY [LARGE SCALE ANALYSIS]</scope>
    <source>
        <tissue>Liver</tissue>
    </source>
</reference>
<reference key="31">
    <citation type="journal article" date="2015" name="Proteomics">
        <title>N-terminome analysis of the human mitochondrial proteome.</title>
        <authorList>
            <person name="Vaca Jacome A.S."/>
            <person name="Rabilloud T."/>
            <person name="Schaeffer-Reiss C."/>
            <person name="Rompais M."/>
            <person name="Ayoub D."/>
            <person name="Lane L."/>
            <person name="Bairoch A."/>
            <person name="Van Dorsselaer A."/>
            <person name="Carapito C."/>
        </authorList>
    </citation>
    <scope>IDENTIFICATION BY MASS SPECTROMETRY [LARGE SCALE ANALYSIS]</scope>
</reference>
<reference key="32">
    <citation type="journal article" date="2019" name="Arch. Virol.">
        <title>The interaction of cellular protein ANP32A with influenza A virus polymerase component PB2 promotes vRNA synthesis.</title>
        <authorList>
            <person name="Wei X."/>
            <person name="Liu Z."/>
            <person name="Wang J."/>
            <person name="Yang R."/>
            <person name="Yang J."/>
            <person name="Guo Y."/>
            <person name="Tan H."/>
            <person name="Chen H."/>
            <person name="Liu Q."/>
            <person name="Liu L."/>
        </authorList>
    </citation>
    <scope>FUNCTION (MICROBIAL INFECTION)</scope>
    <scope>INTERACTION WITH INFLUENZA VIRUS A PROTEIN PB2 (MICROBIAL INFECTION)</scope>
    <scope>MUTAGENESIS OF GLU-189 AND GLU-196</scope>
</reference>
<reference key="33">
    <citation type="journal article" date="2020" name="Nat. Commun.">
        <title>Molecular basis of host-adaptation interactions between influenza virus polymerase PB2 subunit and ANP32A.</title>
        <authorList>
            <person name="Camacho-Zarco A.R."/>
            <person name="Kalayil S."/>
            <person name="Maurin D."/>
            <person name="Salvi N."/>
            <person name="Delaforge E."/>
            <person name="Milles S."/>
            <person name="Jensen M.R."/>
            <person name="Hart D.J."/>
            <person name="Cusack S."/>
            <person name="Blackledge M."/>
        </authorList>
    </citation>
    <scope>FUNCTION (MICROBIAL INFECTION)</scope>
</reference>
<reference key="34">
    <citation type="journal article" date="2020" name="PLoS Pathog.">
        <title>Selective usage of ANP32 proteins by influenza B virus polymerase: Implications in determination of host range.</title>
        <authorList>
            <person name="Zhang Z."/>
            <person name="Zhang H."/>
            <person name="Xu L."/>
            <person name="Guo X."/>
            <person name="Wang W."/>
            <person name="Ji Y."/>
            <person name="Lin C."/>
            <person name="Wang Y."/>
            <person name="Wang X."/>
        </authorList>
    </citation>
    <scope>FUNCTION (MICROBIAL INFECTION)</scope>
    <scope>INTERACTION WITH INFLUENZA VIRUS B PROTEIN PB2 (MICROBIAL INFECTION)</scope>
</reference>
<reference key="35">
    <citation type="journal article" date="2020" name="Nature">
        <title>Host ANP32A mediates the assembly of the influenza virus replicase.</title>
        <authorList>
            <person name="Carrique L."/>
            <person name="Fan H."/>
            <person name="Walker A.P."/>
            <person name="Keown J.R."/>
            <person name="Sharps J."/>
            <person name="Staller E."/>
            <person name="Barclay W.S."/>
            <person name="Fodor E."/>
            <person name="Grimes J.M."/>
        </authorList>
    </citation>
    <scope>FUNCTION (MICROBIAL INFECTION)</scope>
    <scope>INTERACTION WITH INFLUENZA C PROTEIN PB2 (MICROBIAL INFECTION)</scope>
</reference>
<reference key="36">
    <citation type="journal article" date="2007" name="Protein Sci.">
        <title>The crystal structure of the tumor suppressor protein pp32 (Anp32a): structural insights into Anp32 family of proteins.</title>
        <authorList>
            <person name="Huyton T."/>
            <person name="Wolberger C."/>
        </authorList>
    </citation>
    <scope>X-RAY CRYSTALLOGRAPHY (2.4 ANGSTROMS) OF 1-149</scope>
    <scope>LEUCINE-RICH REPEATS</scope>
</reference>
<keyword id="KW-0002">3D-structure</keyword>
<keyword id="KW-0963">Cytoplasm</keyword>
<keyword id="KW-0903">Direct protein sequencing</keyword>
<keyword id="KW-0256">Endoplasmic reticulum</keyword>
<keyword id="KW-0945">Host-virus interaction</keyword>
<keyword id="KW-0433">Leucine-rich repeat</keyword>
<keyword id="KW-0539">Nucleus</keyword>
<keyword id="KW-0597">Phosphoprotein</keyword>
<keyword id="KW-1267">Proteomics identification</keyword>
<keyword id="KW-1185">Reference proteome</keyword>
<keyword id="KW-0677">Repeat</keyword>
<keyword id="KW-0678">Repressor</keyword>
<keyword id="KW-0804">Transcription</keyword>
<keyword id="KW-0805">Transcription regulation</keyword>
<evidence type="ECO:0000250" key="1"/>
<evidence type="ECO:0000256" key="2">
    <source>
        <dbReference type="SAM" id="MobiDB-lite"/>
    </source>
</evidence>
<evidence type="ECO:0000269" key="3">
    <source>
    </source>
</evidence>
<evidence type="ECO:0000269" key="4">
    <source>
    </source>
</evidence>
<evidence type="ECO:0000269" key="5">
    <source>
    </source>
</evidence>
<evidence type="ECO:0000269" key="6">
    <source>
    </source>
</evidence>
<evidence type="ECO:0000269" key="7">
    <source>
    </source>
</evidence>
<evidence type="ECO:0000269" key="8">
    <source>
    </source>
</evidence>
<evidence type="ECO:0000269" key="9">
    <source>
    </source>
</evidence>
<evidence type="ECO:0000269" key="10">
    <source>
    </source>
</evidence>
<evidence type="ECO:0000269" key="11">
    <source>
    </source>
</evidence>
<evidence type="ECO:0000269" key="12">
    <source>
    </source>
</evidence>
<evidence type="ECO:0000269" key="13">
    <source>
    </source>
</evidence>
<evidence type="ECO:0000269" key="14">
    <source>
    </source>
</evidence>
<evidence type="ECO:0000269" key="15">
    <source>
    </source>
</evidence>
<evidence type="ECO:0000269" key="16">
    <source>
    </source>
</evidence>
<evidence type="ECO:0000269" key="17">
    <source>
    </source>
</evidence>
<evidence type="ECO:0000269" key="18">
    <source>
    </source>
</evidence>
<evidence type="ECO:0000269" key="19">
    <source>
    </source>
</evidence>
<evidence type="ECO:0000269" key="20">
    <source>
    </source>
</evidence>
<evidence type="ECO:0000269" key="21">
    <source>
    </source>
</evidence>
<evidence type="ECO:0000269" key="22">
    <source>
    </source>
</evidence>
<evidence type="ECO:0000303" key="23">
    <source>
    </source>
</evidence>
<evidence type="ECO:0000303" key="24">
    <source>
    </source>
</evidence>
<evidence type="ECO:0000305" key="25"/>
<evidence type="ECO:0007744" key="26">
    <source>
    </source>
</evidence>
<evidence type="ECO:0007744" key="27">
    <source>
    </source>
</evidence>
<evidence type="ECO:0007744" key="28">
    <source>
    </source>
</evidence>
<evidence type="ECO:0007829" key="29">
    <source>
        <dbReference type="PDB" id="4XOS"/>
    </source>
</evidence>
<gene>
    <name type="primary">ANP32A</name>
    <name type="synonym">C15orf1</name>
    <name type="synonym">LANP</name>
    <name type="synonym">MAPM</name>
    <name type="synonym">PHAP1</name>
</gene>
<dbReference type="EMBL" id="X75090">
    <property type="protein sequence ID" value="CAA52981.1"/>
    <property type="molecule type" value="mRNA"/>
</dbReference>
<dbReference type="EMBL" id="U60823">
    <property type="protein sequence ID" value="AAC50570.1"/>
    <property type="molecule type" value="mRNA"/>
</dbReference>
<dbReference type="EMBL" id="U73477">
    <property type="protein sequence ID" value="AAB39706.1"/>
    <property type="molecule type" value="mRNA"/>
</dbReference>
<dbReference type="EMBL" id="AF025684">
    <property type="protein sequence ID" value="AAB91548.1"/>
    <property type="molecule type" value="mRNA"/>
</dbReference>
<dbReference type="EMBL" id="AY349171">
    <property type="protein sequence ID" value="AAQ79832.1"/>
    <property type="molecule type" value="mRNA"/>
</dbReference>
<dbReference type="EMBL" id="BT007436">
    <property type="protein sequence ID" value="AAP36104.1"/>
    <property type="molecule type" value="mRNA"/>
</dbReference>
<dbReference type="EMBL" id="AK223280">
    <property type="protein sequence ID" value="BAD97000.1"/>
    <property type="status" value="ALT_INIT"/>
    <property type="molecule type" value="mRNA"/>
</dbReference>
<dbReference type="EMBL" id="AK312703">
    <property type="protein sequence ID" value="BAG35581.1"/>
    <property type="molecule type" value="mRNA"/>
</dbReference>
<dbReference type="EMBL" id="CH471082">
    <property type="protein sequence ID" value="EAW77824.1"/>
    <property type="molecule type" value="Genomic_DNA"/>
</dbReference>
<dbReference type="EMBL" id="BC007200">
    <property type="protein sequence ID" value="AAH07200.1"/>
    <property type="molecule type" value="mRNA"/>
</dbReference>
<dbReference type="CCDS" id="CCDS45292.1"/>
<dbReference type="PIR" id="S36375">
    <property type="entry name" value="S36375"/>
</dbReference>
<dbReference type="PIR" id="S43309">
    <property type="entry name" value="S43309"/>
</dbReference>
<dbReference type="RefSeq" id="NP_006296.1">
    <property type="nucleotide sequence ID" value="NM_006305.4"/>
</dbReference>
<dbReference type="PDB" id="2JE0">
    <property type="method" value="X-ray"/>
    <property type="resolution" value="2.40 A"/>
    <property type="chains" value="A/B/C/D/E/F=1-149"/>
</dbReference>
<dbReference type="PDB" id="2JE1">
    <property type="method" value="X-ray"/>
    <property type="resolution" value="2.69 A"/>
    <property type="chains" value="A/B/C/D=1-149"/>
</dbReference>
<dbReference type="PDB" id="4XOS">
    <property type="method" value="X-ray"/>
    <property type="resolution" value="1.56 A"/>
    <property type="chains" value="A/B=1-149"/>
</dbReference>
<dbReference type="PDB" id="6XZQ">
    <property type="method" value="EM"/>
    <property type="resolution" value="3.60 A"/>
    <property type="chains" value="G=1-249"/>
</dbReference>
<dbReference type="PDB" id="8RMR">
    <property type="method" value="EM"/>
    <property type="resolution" value="3.25 A"/>
    <property type="chains" value="G=1-249"/>
</dbReference>
<dbReference type="PDB" id="8RN0">
    <property type="method" value="EM"/>
    <property type="resolution" value="3.13 A"/>
    <property type="chains" value="G=1-249"/>
</dbReference>
<dbReference type="PDB" id="8RNA">
    <property type="method" value="EM"/>
    <property type="resolution" value="3.57 A"/>
    <property type="chains" value="G=1-249"/>
</dbReference>
<dbReference type="PDB" id="8RNB">
    <property type="method" value="EM"/>
    <property type="resolution" value="3.31 A"/>
    <property type="chains" value="G=1-249"/>
</dbReference>
<dbReference type="PDB" id="8RNC">
    <property type="method" value="EM"/>
    <property type="resolution" value="3.52 A"/>
    <property type="chains" value="G=1-249"/>
</dbReference>
<dbReference type="PDBsum" id="2JE0"/>
<dbReference type="PDBsum" id="2JE1"/>
<dbReference type="PDBsum" id="4XOS"/>
<dbReference type="PDBsum" id="6XZQ"/>
<dbReference type="PDBsum" id="8RMR"/>
<dbReference type="PDBsum" id="8RN0"/>
<dbReference type="PDBsum" id="8RNA"/>
<dbReference type="PDBsum" id="8RNB"/>
<dbReference type="PDBsum" id="8RNC"/>
<dbReference type="EMDB" id="EMD-10665"/>
<dbReference type="EMDB" id="EMD-19368"/>
<dbReference type="EMDB" id="EMD-19382"/>
<dbReference type="EMDB" id="EMD-19392"/>
<dbReference type="EMDB" id="EMD-19393"/>
<dbReference type="EMDB" id="EMD-19394"/>
<dbReference type="SASBDB" id="P39687"/>
<dbReference type="SMR" id="P39687"/>
<dbReference type="BioGRID" id="113791">
    <property type="interactions" value="134"/>
</dbReference>
<dbReference type="CORUM" id="P39687"/>
<dbReference type="FunCoup" id="P39687">
    <property type="interactions" value="3825"/>
</dbReference>
<dbReference type="IntAct" id="P39687">
    <property type="interactions" value="43"/>
</dbReference>
<dbReference type="MINT" id="P39687"/>
<dbReference type="STRING" id="9606.ENSP00000417864"/>
<dbReference type="ChEMBL" id="CHEMBL4295758"/>
<dbReference type="GlyGen" id="P39687">
    <property type="glycosylation" value="1 site, 1 O-linked glycan (1 site)"/>
</dbReference>
<dbReference type="iPTMnet" id="P39687"/>
<dbReference type="PhosphoSitePlus" id="P39687"/>
<dbReference type="SwissPalm" id="P39687"/>
<dbReference type="BioMuta" id="ANP32A"/>
<dbReference type="DMDM" id="730318"/>
<dbReference type="jPOST" id="P39687"/>
<dbReference type="MassIVE" id="P39687"/>
<dbReference type="PaxDb" id="9606-ENSP00000417864"/>
<dbReference type="PeptideAtlas" id="P39687"/>
<dbReference type="ProteomicsDB" id="55318"/>
<dbReference type="Pumba" id="P39687"/>
<dbReference type="TopDownProteomics" id="P39687"/>
<dbReference type="Antibodypedia" id="3930">
    <property type="antibodies" value="489 antibodies from 39 providers"/>
</dbReference>
<dbReference type="DNASU" id="8125"/>
<dbReference type="Ensembl" id="ENST00000465139.6">
    <property type="protein sequence ID" value="ENSP00000417864.2"/>
    <property type="gene ID" value="ENSG00000140350.15"/>
</dbReference>
<dbReference type="GeneID" id="8125"/>
<dbReference type="KEGG" id="hsa:8125"/>
<dbReference type="MANE-Select" id="ENST00000465139.6">
    <property type="protein sequence ID" value="ENSP00000417864.2"/>
    <property type="RefSeq nucleotide sequence ID" value="NM_006305.4"/>
    <property type="RefSeq protein sequence ID" value="NP_006296.1"/>
</dbReference>
<dbReference type="UCSC" id="uc002arl.4">
    <property type="organism name" value="human"/>
</dbReference>
<dbReference type="AGR" id="HGNC:13233"/>
<dbReference type="CTD" id="8125"/>
<dbReference type="DisGeNET" id="8125"/>
<dbReference type="GeneCards" id="ANP32A"/>
<dbReference type="HGNC" id="HGNC:13233">
    <property type="gene designation" value="ANP32A"/>
</dbReference>
<dbReference type="HPA" id="ENSG00000140350">
    <property type="expression patterns" value="Low tissue specificity"/>
</dbReference>
<dbReference type="MIM" id="600832">
    <property type="type" value="gene"/>
</dbReference>
<dbReference type="neXtProt" id="NX_P39687"/>
<dbReference type="OpenTargets" id="ENSG00000140350"/>
<dbReference type="PharmGKB" id="PA24811"/>
<dbReference type="VEuPathDB" id="HostDB:ENSG00000140350"/>
<dbReference type="eggNOG" id="KOG2739">
    <property type="taxonomic scope" value="Eukaryota"/>
</dbReference>
<dbReference type="GeneTree" id="ENSGT00950000182907"/>
<dbReference type="HOGENOM" id="CLU_063314_1_1_1"/>
<dbReference type="InParanoid" id="P39687"/>
<dbReference type="OMA" id="VTNENAY"/>
<dbReference type="OrthoDB" id="2160613at2759"/>
<dbReference type="PAN-GO" id="P39687">
    <property type="GO annotations" value="5 GO annotations based on evolutionary models"/>
</dbReference>
<dbReference type="PhylomeDB" id="P39687"/>
<dbReference type="TreeFam" id="TF317206"/>
<dbReference type="PathwayCommons" id="P39687"/>
<dbReference type="Reactome" id="R-HSA-450520">
    <property type="pathway name" value="HuR (ELAVL1) binds and stabilizes mRNA"/>
</dbReference>
<dbReference type="SignaLink" id="P39687"/>
<dbReference type="SIGNOR" id="P39687"/>
<dbReference type="BioGRID-ORCS" id="8125">
    <property type="hits" value="24 hits in 1162 CRISPR screens"/>
</dbReference>
<dbReference type="ChiTaRS" id="ANP32A">
    <property type="organism name" value="human"/>
</dbReference>
<dbReference type="EvolutionaryTrace" id="P39687"/>
<dbReference type="GenomeRNAi" id="8125"/>
<dbReference type="Pharos" id="P39687">
    <property type="development level" value="Tbio"/>
</dbReference>
<dbReference type="PRO" id="PR:P39687"/>
<dbReference type="Proteomes" id="UP000005640">
    <property type="component" value="Chromosome 15"/>
</dbReference>
<dbReference type="RNAct" id="P39687">
    <property type="molecule type" value="protein"/>
</dbReference>
<dbReference type="Bgee" id="ENSG00000140350">
    <property type="expression patterns" value="Expressed in ganglionic eminence and 210 other cell types or tissues"/>
</dbReference>
<dbReference type="ExpressionAtlas" id="P39687">
    <property type="expression patterns" value="baseline and differential"/>
</dbReference>
<dbReference type="GO" id="GO:0005737">
    <property type="term" value="C:cytoplasm"/>
    <property type="evidence" value="ECO:0000314"/>
    <property type="project" value="UniProtKB"/>
</dbReference>
<dbReference type="GO" id="GO:0005783">
    <property type="term" value="C:endoplasmic reticulum"/>
    <property type="evidence" value="ECO:0000314"/>
    <property type="project" value="UniProtKB"/>
</dbReference>
<dbReference type="GO" id="GO:0005654">
    <property type="term" value="C:nucleoplasm"/>
    <property type="evidence" value="ECO:0000304"/>
    <property type="project" value="Reactome"/>
</dbReference>
<dbReference type="GO" id="GO:0005634">
    <property type="term" value="C:nucleus"/>
    <property type="evidence" value="ECO:0000314"/>
    <property type="project" value="UniProtKB"/>
</dbReference>
<dbReference type="GO" id="GO:0048471">
    <property type="term" value="C:perinuclear region of cytoplasm"/>
    <property type="evidence" value="ECO:0000314"/>
    <property type="project" value="UniProtKB"/>
</dbReference>
<dbReference type="GO" id="GO:0042393">
    <property type="term" value="F:histone binding"/>
    <property type="evidence" value="ECO:0000318"/>
    <property type="project" value="GO_Central"/>
</dbReference>
<dbReference type="GO" id="GO:0003723">
    <property type="term" value="F:RNA binding"/>
    <property type="evidence" value="ECO:0007005"/>
    <property type="project" value="UniProtKB"/>
</dbReference>
<dbReference type="GO" id="GO:0035556">
    <property type="term" value="P:intracellular signal transduction"/>
    <property type="evidence" value="ECO:0000304"/>
    <property type="project" value="ProtInc"/>
</dbReference>
<dbReference type="GO" id="GO:0006913">
    <property type="term" value="P:nucleocytoplasmic transport"/>
    <property type="evidence" value="ECO:0000314"/>
    <property type="project" value="UniProtKB"/>
</dbReference>
<dbReference type="GO" id="GO:0042981">
    <property type="term" value="P:regulation of apoptotic process"/>
    <property type="evidence" value="ECO:0000318"/>
    <property type="project" value="GO_Central"/>
</dbReference>
<dbReference type="FunFam" id="3.80.10.10:FF:000003">
    <property type="entry name" value="Acidic leucine-rich nuclear phosphoprotein 32 family member A"/>
    <property type="match status" value="1"/>
</dbReference>
<dbReference type="Gene3D" id="3.80.10.10">
    <property type="entry name" value="Ribonuclease Inhibitor"/>
    <property type="match status" value="1"/>
</dbReference>
<dbReference type="InterPro" id="IPR045081">
    <property type="entry name" value="AN32"/>
</dbReference>
<dbReference type="InterPro" id="IPR001611">
    <property type="entry name" value="Leu-rich_rpt"/>
</dbReference>
<dbReference type="InterPro" id="IPR032675">
    <property type="entry name" value="LRR_dom_sf"/>
</dbReference>
<dbReference type="InterPro" id="IPR003603">
    <property type="entry name" value="U2A'_phosphoprotein32A_C"/>
</dbReference>
<dbReference type="PANTHER" id="PTHR11375">
    <property type="entry name" value="ACIDIC LEUCINE-RICH NUCLEAR PHOSPHOPROTEIN 32"/>
    <property type="match status" value="1"/>
</dbReference>
<dbReference type="PANTHER" id="PTHR11375:SF1">
    <property type="entry name" value="ACIDIC LEUCINE-RICH NUCLEAR PHOSPHOPROTEIN 32 FAMILY MEMBER A"/>
    <property type="match status" value="1"/>
</dbReference>
<dbReference type="Pfam" id="PF14580">
    <property type="entry name" value="LRR_9"/>
    <property type="match status" value="1"/>
</dbReference>
<dbReference type="SMART" id="SM00446">
    <property type="entry name" value="LRRcap"/>
    <property type="match status" value="1"/>
</dbReference>
<dbReference type="SUPFAM" id="SSF52058">
    <property type="entry name" value="L domain-like"/>
    <property type="match status" value="1"/>
</dbReference>
<dbReference type="PROSITE" id="PS51450">
    <property type="entry name" value="LRR"/>
    <property type="match status" value="4"/>
</dbReference>
<proteinExistence type="evidence at protein level"/>
<organism>
    <name type="scientific">Homo sapiens</name>
    <name type="common">Human</name>
    <dbReference type="NCBI Taxonomy" id="9606"/>
    <lineage>
        <taxon>Eukaryota</taxon>
        <taxon>Metazoa</taxon>
        <taxon>Chordata</taxon>
        <taxon>Craniata</taxon>
        <taxon>Vertebrata</taxon>
        <taxon>Euteleostomi</taxon>
        <taxon>Mammalia</taxon>
        <taxon>Eutheria</taxon>
        <taxon>Euarchontoglires</taxon>
        <taxon>Primates</taxon>
        <taxon>Haplorrhini</taxon>
        <taxon>Catarrhini</taxon>
        <taxon>Hominidae</taxon>
        <taxon>Homo</taxon>
    </lineage>
</organism>
<sequence>MEMGRRIHLELRNRTPSDVKELVLDNSRSNEGKLEGLTDEFEELEFLSTINVGLTSIANLPKLNKLKKLELSDNRVSGGLEVLAEKCPNLTHLNLSGNKIKDLSTIEPLKKLENLKSLDLFNCEVTNLNDYRENVFKLLPQLTYLDGYDRDDKEAPDSDAEGYVEGLDDEEEDEDEEEYDEDAQVVEDEEDEDEEEEGEEEDVSGEEEEDEEGYNDGEVDDEEDEEELGEEERGQKRKREPEDEGEDDD</sequence>
<protein>
    <recommendedName>
        <fullName evidence="23 24">Acidic leucine-rich nuclear phosphoprotein 32 family member A</fullName>
    </recommendedName>
    <alternativeName>
        <fullName>Acidic nuclear phosphoprotein pp32</fullName>
        <shortName>pp32</shortName>
    </alternativeName>
    <alternativeName>
        <fullName>Leucine-rich acidic nuclear protein</fullName>
        <shortName>LANP</shortName>
    </alternativeName>
    <alternativeName>
        <fullName>Mapmodulin</fullName>
    </alternativeName>
    <alternativeName>
        <fullName>Potent heat-stable protein phosphatase 2A inhibitor I1PP2A</fullName>
    </alternativeName>
    <alternativeName>
        <fullName>Putative HLA-DR-associated protein I</fullName>
        <shortName>PHAPI</shortName>
    </alternativeName>
</protein>
<comment type="function">
    <text evidence="3 5 8 11 12 14 16 17">Multifunctional protein that is involved in the regulation of many processes including tumor suppression, apoptosis, cell cycle progression or transcription (PubMed:10400610, PubMed:11360199, PubMed:16341127, PubMed:18439902). Promotes apoptosis by favouring the activation of caspase-9/CASP9 and allowing apoptosome formation (PubMed:18439902). In addition, plays a role in the modulation of histone acetylation and transcription as part of the INHAT (inhibitor of histone acetyltransferases) complex. Inhibits the histone-acetyltranferase activity of EP300/CREBBP (CREB-binding protein) and EP300/CREBBP-associated factor by histone masking (PubMed:11830591). Preferentially binds to unmodified histone H3 and sterically inhibiting its acetylation and phosphorylation leading to cell growth inhibition (PubMed:16341127). Participates in other biochemical processes such as regulation of mRNA nuclear-to-cytoplasmic translocation and stability by its association with ELAVL1 (Hu-antigen R) (PubMed:18180367). Plays a role in E4F1-mediated transcriptional repression as well as inhibition of protein phosphatase 2A (PubMed:15642345, PubMed:17557114).</text>
</comment>
<comment type="function">
    <text evidence="18 19 20 21 22">(Microbial infection) Plays an essential role in influenza A, B and C viral genome replication (PubMed:30666459, PubMed:32694517, PubMed:33045004, PubMed:33208942). Mechanistically, mediates the assembly of the viral replicase asymmetric dimers composed of PB1, PB2 and PA via its N-terminal region (PubMed:33208942). Also plays an essential role in foamy virus mRNA export from the nucleus (PubMed:21159877).</text>
</comment>
<comment type="subunit">
    <text evidence="4 6 7 9 13 14 16">Component of the SET complex, composed of at least ANP32A, APEX1, HMGB2, NME1, SET and TREX1. Directly interacts with SET. Interacts with ATXN1/SCA1. Interacts with MAP1B. Interacts with ELAVL1. Part of the INHAT (inhibitor of histone acetyltransferases) complex. Interacts with E4F1.</text>
</comment>
<comment type="subunit">
    <text evidence="19">(Microbial infection) Interacts (via C-terminus) with influenza virus A protein PB2; this interaction promotes viral replication.</text>
</comment>
<comment type="subunit">
    <text evidence="21">(Microbial infection) Interacts (via C-terminus) with influenza virus B protein PB2; this interaction promotes viral replication.</text>
</comment>
<comment type="subunit">
    <text evidence="22">(Microbial infection) Interacts (via C-terminus) with influenza virus C protein PB2; this interaction promotes viral replication by bridging viral replicase dimers together.</text>
</comment>
<comment type="interaction">
    <interactant intactId="EBI-359234">
        <id>P39687</id>
    </interactant>
    <interactant intactId="EBI-930964">
        <id>P54253</id>
        <label>ATXN1</label>
    </interactant>
    <organismsDiffer>false</organismsDiffer>
    <experiments>3</experiments>
</comment>
<comment type="interaction">
    <interactant intactId="EBI-359234">
        <id>P39687</id>
    </interactant>
    <interactant intactId="EBI-710484">
        <id>O15169</id>
        <label>AXIN1</label>
    </interactant>
    <organismsDiffer>false</organismsDiffer>
    <experiments>2</experiments>
</comment>
<comment type="interaction">
    <interactant intactId="EBI-359234">
        <id>P39687</id>
    </interactant>
    <interactant intactId="EBI-1227043">
        <id>Q66K89</id>
        <label>E4F1</label>
    </interactant>
    <organismsDiffer>false</organismsDiffer>
    <experiments>3</experiments>
</comment>
<comment type="interaction">
    <interactant intactId="EBI-359234">
        <id>P39687</id>
    </interactant>
    <interactant intactId="EBI-712311">
        <id>P67775</id>
        <label>PPP2CA</label>
    </interactant>
    <organismsDiffer>false</organismsDiffer>
    <experiments>2</experiments>
</comment>
<comment type="interaction">
    <interactant intactId="EBI-359234">
        <id>P39687</id>
    </interactant>
    <interactant intactId="EBI-7050205">
        <id>P63331</id>
        <label>Ppp2ca</label>
    </interactant>
    <organismsDiffer>true</organismsDiffer>
    <experiments>2</experiments>
</comment>
<comment type="subcellular location">
    <subcellularLocation>
        <location evidence="8 16">Nucleus</location>
    </subcellularLocation>
    <subcellularLocation>
        <location evidence="16">Cytoplasm</location>
    </subcellularLocation>
    <subcellularLocation>
        <location>Endoplasmic reticulum</location>
    </subcellularLocation>
    <text evidence="1 16">Translocates to the cytoplasm during the process of neuritogenesis (By similarity). Shuttles between nucleus and cytoplasm.</text>
</comment>
<comment type="tissue specificity">
    <text evidence="11">Expressed in all tissues tested. Highly expressed in kidney and skeletal muscle, moderate levels of expression in brain, placenta and pancreas, and weakly expressed in lung. Found in all regions of the brain examined (amygdala, caudate nucleus, corpus callosum, hippocampus and thalamus), with highest levels in amygdala.</text>
</comment>
<comment type="PTM">
    <text evidence="10">Phosphorylated on serine residues, at least in part by casein kinase 2/CK2.</text>
</comment>
<comment type="PTM">
    <text>The N-terminus is blocked.</text>
</comment>
<comment type="PTM">
    <text evidence="1">Some glutamate residues are glycylated by TTLL8. This modification occurs exclusively on glutamate residues and results in a glycine chain on the gamma-carboxyl group (By similarity).</text>
</comment>
<comment type="similarity">
    <text evidence="25">Belongs to the ANP32 family.</text>
</comment>
<comment type="sequence caution" evidence="25">
    <conflict type="erroneous initiation">
        <sequence resource="EMBL-CDS" id="BAD97000"/>
    </conflict>
</comment>
<feature type="chain" id="PRO_0000137592" description="Acidic leucine-rich nuclear phosphoprotein 32 family member A">
    <location>
        <begin position="1"/>
        <end position="249"/>
    </location>
</feature>
<feature type="repeat" description="LRR 1" evidence="15">
    <location>
        <begin position="18"/>
        <end position="38"/>
    </location>
</feature>
<feature type="repeat" description="LRR 2" evidence="15">
    <location>
        <begin position="43"/>
        <end position="64"/>
    </location>
</feature>
<feature type="repeat" description="LRR 3" evidence="15">
    <location>
        <begin position="65"/>
        <end position="87"/>
    </location>
</feature>
<feature type="repeat" description="LRR 4" evidence="15">
    <location>
        <begin position="89"/>
        <end position="110"/>
    </location>
</feature>
<feature type="domain" description="LRRCT">
    <location>
        <begin position="123"/>
        <end position="161"/>
    </location>
</feature>
<feature type="region of interest" description="Disordered" evidence="2">
    <location>
        <begin position="147"/>
        <end position="249"/>
    </location>
</feature>
<feature type="region of interest" description="Necessary for tumor-suppressive function">
    <location>
        <begin position="150"/>
        <end position="174"/>
    </location>
</feature>
<feature type="region of interest" description="Interaction with E4F1" evidence="1">
    <location>
        <begin position="165"/>
        <end position="249"/>
    </location>
</feature>
<feature type="compositionally biased region" description="Basic and acidic residues" evidence="2">
    <location>
        <begin position="147"/>
        <end position="156"/>
    </location>
</feature>
<feature type="compositionally biased region" description="Acidic residues" evidence="2">
    <location>
        <begin position="157"/>
        <end position="230"/>
    </location>
</feature>
<feature type="modified residue" description="Phosphothreonine" evidence="26 27">
    <location>
        <position position="15"/>
    </location>
</feature>
<feature type="modified residue" description="Phosphoserine" evidence="26 27">
    <location>
        <position position="17"/>
    </location>
</feature>
<feature type="modified residue" description="Phosphoserine; by CK2" evidence="10 28">
    <location>
        <position position="158"/>
    </location>
</feature>
<feature type="modified residue" description="Phosphoserine; by CK2" evidence="10">
    <location>
        <position position="204"/>
    </location>
</feature>
<feature type="mutagenesis site" description="Complete loss of phosphorylation; when associated with A-204." evidence="10">
    <original>S</original>
    <variation>A</variation>
    <location>
        <position position="158"/>
    </location>
</feature>
<feature type="mutagenesis site" description="No loss of phosphorylation." evidence="10">
    <original>S</original>
    <variation>A</variation>
    <location>
        <position position="158"/>
    </location>
</feature>
<feature type="mutagenesis site" description="Loss of interaction with influenza virus A PB2." evidence="19">
    <original>E</original>
    <variation>A</variation>
    <location>
        <position position="189"/>
    </location>
</feature>
<feature type="mutagenesis site" description="Loss of interaction with influenza virus A PB2." evidence="19">
    <original>E</original>
    <variation>A</variation>
    <location>
        <position position="196"/>
    </location>
</feature>
<feature type="mutagenesis site" description="Complete loss of phosphorylation; when associated with A-158." evidence="10">
    <original>S</original>
    <variation>A</variation>
    <location>
        <position position="204"/>
    </location>
</feature>
<feature type="mutagenesis site" description="No loss of phosphorylation.">
    <original>S</original>
    <variation>A</variation>
    <location>
        <position position="204"/>
    </location>
</feature>
<feature type="sequence conflict" description="In Ref. 8; BAD97000." evidence="25" ref="8">
    <original>V</original>
    <variation>A</variation>
    <location>
        <position position="186"/>
    </location>
</feature>
<feature type="helix" evidence="29">
    <location>
        <begin position="3"/>
        <end position="10"/>
    </location>
</feature>
<feature type="turn" evidence="29">
    <location>
        <begin position="11"/>
        <end position="13"/>
    </location>
</feature>
<feature type="helix" evidence="29">
    <location>
        <begin position="16"/>
        <end position="18"/>
    </location>
</feature>
<feature type="strand" evidence="29">
    <location>
        <begin position="20"/>
        <end position="23"/>
    </location>
</feature>
<feature type="strand" evidence="29">
    <location>
        <begin position="46"/>
        <end position="48"/>
    </location>
</feature>
<feature type="strand" evidence="29">
    <location>
        <begin position="68"/>
        <end position="70"/>
    </location>
</feature>
<feature type="helix" evidence="29">
    <location>
        <begin position="81"/>
        <end position="86"/>
    </location>
</feature>
<feature type="strand" evidence="29">
    <location>
        <begin position="92"/>
        <end position="94"/>
    </location>
</feature>
<feature type="helix" evidence="29">
    <location>
        <begin position="103"/>
        <end position="106"/>
    </location>
</feature>
<feature type="helix" evidence="29">
    <location>
        <begin position="107"/>
        <end position="111"/>
    </location>
</feature>
<feature type="strand" evidence="29">
    <location>
        <begin position="117"/>
        <end position="119"/>
    </location>
</feature>
<feature type="helix" evidence="29">
    <location>
        <begin position="124"/>
        <end position="127"/>
    </location>
</feature>
<feature type="helix" evidence="29">
    <location>
        <begin position="131"/>
        <end position="138"/>
    </location>
</feature>